<reference key="1">
    <citation type="journal article" date="2006" name="Proc. Natl. Acad. Sci. U.S.A.">
        <title>Comparative genomics of the lactic acid bacteria.</title>
        <authorList>
            <person name="Makarova K.S."/>
            <person name="Slesarev A."/>
            <person name="Wolf Y.I."/>
            <person name="Sorokin A."/>
            <person name="Mirkin B."/>
            <person name="Koonin E.V."/>
            <person name="Pavlov A."/>
            <person name="Pavlova N."/>
            <person name="Karamychev V."/>
            <person name="Polouchine N."/>
            <person name="Shakhova V."/>
            <person name="Grigoriev I."/>
            <person name="Lou Y."/>
            <person name="Rohksar D."/>
            <person name="Lucas S."/>
            <person name="Huang K."/>
            <person name="Goodstein D.M."/>
            <person name="Hawkins T."/>
            <person name="Plengvidhya V."/>
            <person name="Welker D."/>
            <person name="Hughes J."/>
            <person name="Goh Y."/>
            <person name="Benson A."/>
            <person name="Baldwin K."/>
            <person name="Lee J.-H."/>
            <person name="Diaz-Muniz I."/>
            <person name="Dosti B."/>
            <person name="Smeianov V."/>
            <person name="Wechter W."/>
            <person name="Barabote R."/>
            <person name="Lorca G."/>
            <person name="Altermann E."/>
            <person name="Barrangou R."/>
            <person name="Ganesan B."/>
            <person name="Xie Y."/>
            <person name="Rawsthorne H."/>
            <person name="Tamir D."/>
            <person name="Parker C."/>
            <person name="Breidt F."/>
            <person name="Broadbent J.R."/>
            <person name="Hutkins R."/>
            <person name="O'Sullivan D."/>
            <person name="Steele J."/>
            <person name="Unlu G."/>
            <person name="Saier M.H. Jr."/>
            <person name="Klaenhammer T."/>
            <person name="Richardson P."/>
            <person name="Kozyavkin S."/>
            <person name="Weimer B.C."/>
            <person name="Mills D.A."/>
        </authorList>
    </citation>
    <scope>NUCLEOTIDE SEQUENCE [LARGE SCALE GENOMIC DNA]</scope>
    <source>
        <strain>ATCC 367 / BCRC 12310 / CIP 105137 / JCM 1170 / LMG 11437 / NCIMB 947 / NCTC 947</strain>
    </source>
</reference>
<evidence type="ECO:0000255" key="1">
    <source>
        <dbReference type="HAMAP-Rule" id="MF_01263"/>
    </source>
</evidence>
<comment type="function">
    <text evidence="1">Catalyzes the addition and repair of the essential 3'-terminal CCA sequence in tRNAs without using a nucleic acid template. Adds these three nucleotides in the order of C, C, and A to the tRNA nucleotide-73, using CTP and ATP as substrates and producing inorganic pyrophosphate. tRNA 3'-terminal CCA addition is required both for tRNA processing and repair. Also involved in tRNA surveillance by mediating tandem CCA addition to generate a CCACCA at the 3' terminus of unstable tRNAs. While stable tRNAs receive only 3'-terminal CCA, unstable tRNAs are marked with CCACCA and rapidly degraded.</text>
</comment>
<comment type="catalytic activity">
    <reaction evidence="1">
        <text>a tRNA precursor + 2 CTP + ATP = a tRNA with a 3' CCA end + 3 diphosphate</text>
        <dbReference type="Rhea" id="RHEA:14433"/>
        <dbReference type="Rhea" id="RHEA-COMP:10465"/>
        <dbReference type="Rhea" id="RHEA-COMP:10468"/>
        <dbReference type="ChEBI" id="CHEBI:30616"/>
        <dbReference type="ChEBI" id="CHEBI:33019"/>
        <dbReference type="ChEBI" id="CHEBI:37563"/>
        <dbReference type="ChEBI" id="CHEBI:74896"/>
        <dbReference type="ChEBI" id="CHEBI:83071"/>
        <dbReference type="EC" id="2.7.7.72"/>
    </reaction>
</comment>
<comment type="catalytic activity">
    <reaction evidence="1">
        <text>a tRNA with a 3' CCA end + 2 CTP + ATP = a tRNA with a 3' CCACCA end + 3 diphosphate</text>
        <dbReference type="Rhea" id="RHEA:76235"/>
        <dbReference type="Rhea" id="RHEA-COMP:10468"/>
        <dbReference type="Rhea" id="RHEA-COMP:18655"/>
        <dbReference type="ChEBI" id="CHEBI:30616"/>
        <dbReference type="ChEBI" id="CHEBI:33019"/>
        <dbReference type="ChEBI" id="CHEBI:37563"/>
        <dbReference type="ChEBI" id="CHEBI:83071"/>
        <dbReference type="ChEBI" id="CHEBI:195187"/>
    </reaction>
    <physiologicalReaction direction="left-to-right" evidence="1">
        <dbReference type="Rhea" id="RHEA:76236"/>
    </physiologicalReaction>
</comment>
<comment type="cofactor">
    <cofactor evidence="1">
        <name>Mg(2+)</name>
        <dbReference type="ChEBI" id="CHEBI:18420"/>
    </cofactor>
</comment>
<comment type="subunit">
    <text evidence="1">Homodimer.</text>
</comment>
<comment type="miscellaneous">
    <text evidence="1">A single active site specifically recognizes both ATP and CTP and is responsible for their addition.</text>
</comment>
<comment type="similarity">
    <text evidence="1">Belongs to the tRNA nucleotidyltransferase/poly(A) polymerase family. Bacterial CCA-adding enzyme type 3 subfamily.</text>
</comment>
<protein>
    <recommendedName>
        <fullName evidence="1">CCA-adding enzyme</fullName>
        <ecNumber evidence="1">2.7.7.72</ecNumber>
    </recommendedName>
    <alternativeName>
        <fullName evidence="1">CCA tRNA nucleotidyltransferase</fullName>
    </alternativeName>
    <alternativeName>
        <fullName evidence="1">tRNA CCA-pyrophosphorylase</fullName>
    </alternativeName>
    <alternativeName>
        <fullName evidence="1">tRNA adenylyl-/cytidylyl- transferase</fullName>
    </alternativeName>
    <alternativeName>
        <fullName evidence="1">tRNA nucleotidyltransferase</fullName>
    </alternativeName>
    <alternativeName>
        <fullName evidence="1">tRNA-NT</fullName>
    </alternativeName>
</protein>
<gene>
    <name evidence="1" type="primary">cca</name>
    <name type="ordered locus">LVIS_0782</name>
</gene>
<sequence length="397" mass="44264">MQLEHLPEEFEMARPVLQTIEQAGYEAYFVGGSVRDTILGKEIHDVDIATSAYPDEIKHLFKRTVDTGIEHGTVMILDHGTGYETTTFRSESTYTDFRRPDQVTFVRSLAEDLKRRDFTINALAMKEDGTVIDLFDGLADLKHRQIRAVGDPQERFHEDALRMMRAVRFASQLNFTIVPETLAAMTSHAELLRKIAVERTQVELLKLLTGQAPQQGLTDLLTTGLWQYCPDFADHKVDLERLTAQLHQGASTDLTAWTLLTTSFGLETNAITTFLKHWKTANQTISAVQMTTKMAQHLLQGSLSTWQVYQCGEDQLMIANEAAVVLGATDRSRELVAQWQNLPIQTKKALAVTGRDLMQAGVQPGPQLGAILGDLEYQVVTGKLPNEKPALVAAVTD</sequence>
<dbReference type="EC" id="2.7.7.72" evidence="1"/>
<dbReference type="EMBL" id="CP000416">
    <property type="protein sequence ID" value="ABJ63925.1"/>
    <property type="molecule type" value="Genomic_DNA"/>
</dbReference>
<dbReference type="RefSeq" id="WP_011667556.1">
    <property type="nucleotide sequence ID" value="NC_008497.1"/>
</dbReference>
<dbReference type="SMR" id="Q03S97"/>
<dbReference type="STRING" id="387344.LVIS_0782"/>
<dbReference type="KEGG" id="lbr:LVIS_0782"/>
<dbReference type="PATRIC" id="fig|387344.15.peg.757"/>
<dbReference type="eggNOG" id="COG0617">
    <property type="taxonomic scope" value="Bacteria"/>
</dbReference>
<dbReference type="HOGENOM" id="CLU_015961_3_1_9"/>
<dbReference type="Proteomes" id="UP000001652">
    <property type="component" value="Chromosome"/>
</dbReference>
<dbReference type="GO" id="GO:0005524">
    <property type="term" value="F:ATP binding"/>
    <property type="evidence" value="ECO:0007669"/>
    <property type="project" value="UniProtKB-UniRule"/>
</dbReference>
<dbReference type="GO" id="GO:0004810">
    <property type="term" value="F:CCA tRNA nucleotidyltransferase activity"/>
    <property type="evidence" value="ECO:0007669"/>
    <property type="project" value="UniProtKB-UniRule"/>
</dbReference>
<dbReference type="GO" id="GO:0000287">
    <property type="term" value="F:magnesium ion binding"/>
    <property type="evidence" value="ECO:0007669"/>
    <property type="project" value="UniProtKB-UniRule"/>
</dbReference>
<dbReference type="GO" id="GO:0000049">
    <property type="term" value="F:tRNA binding"/>
    <property type="evidence" value="ECO:0007669"/>
    <property type="project" value="UniProtKB-UniRule"/>
</dbReference>
<dbReference type="GO" id="GO:0042245">
    <property type="term" value="P:RNA repair"/>
    <property type="evidence" value="ECO:0007669"/>
    <property type="project" value="UniProtKB-KW"/>
</dbReference>
<dbReference type="GO" id="GO:0001680">
    <property type="term" value="P:tRNA 3'-terminal CCA addition"/>
    <property type="evidence" value="ECO:0007669"/>
    <property type="project" value="UniProtKB-UniRule"/>
</dbReference>
<dbReference type="CDD" id="cd05398">
    <property type="entry name" value="NT_ClassII-CCAase"/>
    <property type="match status" value="1"/>
</dbReference>
<dbReference type="Gene3D" id="1.10.110.30">
    <property type="match status" value="1"/>
</dbReference>
<dbReference type="Gene3D" id="1.10.246.80">
    <property type="match status" value="1"/>
</dbReference>
<dbReference type="Gene3D" id="1.20.58.560">
    <property type="match status" value="1"/>
</dbReference>
<dbReference type="Gene3D" id="3.30.460.10">
    <property type="entry name" value="Beta Polymerase, domain 2"/>
    <property type="match status" value="1"/>
</dbReference>
<dbReference type="HAMAP" id="MF_01263">
    <property type="entry name" value="CCA_bact_type3"/>
    <property type="match status" value="1"/>
</dbReference>
<dbReference type="InterPro" id="IPR050264">
    <property type="entry name" value="Bact_CCA-adding_enz_type3_sf"/>
</dbReference>
<dbReference type="InterPro" id="IPR032810">
    <property type="entry name" value="CCA-adding_enz_C"/>
</dbReference>
<dbReference type="InterPro" id="IPR023068">
    <property type="entry name" value="CCA-adding_enz_firmicutes"/>
</dbReference>
<dbReference type="InterPro" id="IPR043519">
    <property type="entry name" value="NT_sf"/>
</dbReference>
<dbReference type="InterPro" id="IPR002646">
    <property type="entry name" value="PolA_pol_head_dom"/>
</dbReference>
<dbReference type="InterPro" id="IPR032828">
    <property type="entry name" value="PolyA_RNA-bd"/>
</dbReference>
<dbReference type="NCBIfam" id="NF009814">
    <property type="entry name" value="PRK13299.1"/>
    <property type="match status" value="1"/>
</dbReference>
<dbReference type="PANTHER" id="PTHR46173">
    <property type="entry name" value="CCA TRNA NUCLEOTIDYLTRANSFERASE 1, MITOCHONDRIAL"/>
    <property type="match status" value="1"/>
</dbReference>
<dbReference type="PANTHER" id="PTHR46173:SF1">
    <property type="entry name" value="CCA TRNA NUCLEOTIDYLTRANSFERASE 1, MITOCHONDRIAL"/>
    <property type="match status" value="1"/>
</dbReference>
<dbReference type="Pfam" id="PF01743">
    <property type="entry name" value="PolyA_pol"/>
    <property type="match status" value="1"/>
</dbReference>
<dbReference type="Pfam" id="PF12627">
    <property type="entry name" value="PolyA_pol_RNAbd"/>
    <property type="match status" value="1"/>
</dbReference>
<dbReference type="Pfam" id="PF13735">
    <property type="entry name" value="tRNA_NucTran2_2"/>
    <property type="match status" value="1"/>
</dbReference>
<dbReference type="SUPFAM" id="SSF81301">
    <property type="entry name" value="Nucleotidyltransferase"/>
    <property type="match status" value="1"/>
</dbReference>
<dbReference type="SUPFAM" id="SSF81891">
    <property type="entry name" value="Poly A polymerase C-terminal region-like"/>
    <property type="match status" value="1"/>
</dbReference>
<feature type="chain" id="PRO_1000054323" description="CCA-adding enzyme">
    <location>
        <begin position="1"/>
        <end position="397"/>
    </location>
</feature>
<feature type="binding site" evidence="1">
    <location>
        <position position="32"/>
    </location>
    <ligand>
        <name>ATP</name>
        <dbReference type="ChEBI" id="CHEBI:30616"/>
    </ligand>
</feature>
<feature type="binding site" evidence="1">
    <location>
        <position position="32"/>
    </location>
    <ligand>
        <name>CTP</name>
        <dbReference type="ChEBI" id="CHEBI:37563"/>
    </ligand>
</feature>
<feature type="binding site" evidence="1">
    <location>
        <position position="35"/>
    </location>
    <ligand>
        <name>ATP</name>
        <dbReference type="ChEBI" id="CHEBI:30616"/>
    </ligand>
</feature>
<feature type="binding site" evidence="1">
    <location>
        <position position="35"/>
    </location>
    <ligand>
        <name>CTP</name>
        <dbReference type="ChEBI" id="CHEBI:37563"/>
    </ligand>
</feature>
<feature type="binding site" evidence="1">
    <location>
        <position position="45"/>
    </location>
    <ligand>
        <name>Mg(2+)</name>
        <dbReference type="ChEBI" id="CHEBI:18420"/>
    </ligand>
</feature>
<feature type="binding site" evidence="1">
    <location>
        <position position="47"/>
    </location>
    <ligand>
        <name>Mg(2+)</name>
        <dbReference type="ChEBI" id="CHEBI:18420"/>
    </ligand>
</feature>
<feature type="binding site" evidence="1">
    <location>
        <position position="116"/>
    </location>
    <ligand>
        <name>ATP</name>
        <dbReference type="ChEBI" id="CHEBI:30616"/>
    </ligand>
</feature>
<feature type="binding site" evidence="1">
    <location>
        <position position="116"/>
    </location>
    <ligand>
        <name>CTP</name>
        <dbReference type="ChEBI" id="CHEBI:37563"/>
    </ligand>
</feature>
<feature type="binding site" evidence="1">
    <location>
        <position position="159"/>
    </location>
    <ligand>
        <name>ATP</name>
        <dbReference type="ChEBI" id="CHEBI:30616"/>
    </ligand>
</feature>
<feature type="binding site" evidence="1">
    <location>
        <position position="159"/>
    </location>
    <ligand>
        <name>CTP</name>
        <dbReference type="ChEBI" id="CHEBI:37563"/>
    </ligand>
</feature>
<feature type="binding site" evidence="1">
    <location>
        <position position="162"/>
    </location>
    <ligand>
        <name>ATP</name>
        <dbReference type="ChEBI" id="CHEBI:30616"/>
    </ligand>
</feature>
<feature type="binding site" evidence="1">
    <location>
        <position position="162"/>
    </location>
    <ligand>
        <name>CTP</name>
        <dbReference type="ChEBI" id="CHEBI:37563"/>
    </ligand>
</feature>
<feature type="binding site" evidence="1">
    <location>
        <position position="165"/>
    </location>
    <ligand>
        <name>ATP</name>
        <dbReference type="ChEBI" id="CHEBI:30616"/>
    </ligand>
</feature>
<feature type="binding site" evidence="1">
    <location>
        <position position="165"/>
    </location>
    <ligand>
        <name>CTP</name>
        <dbReference type="ChEBI" id="CHEBI:37563"/>
    </ligand>
</feature>
<feature type="binding site" evidence="1">
    <location>
        <position position="168"/>
    </location>
    <ligand>
        <name>ATP</name>
        <dbReference type="ChEBI" id="CHEBI:30616"/>
    </ligand>
</feature>
<feature type="binding site" evidence="1">
    <location>
        <position position="168"/>
    </location>
    <ligand>
        <name>CTP</name>
        <dbReference type="ChEBI" id="CHEBI:37563"/>
    </ligand>
</feature>
<organism>
    <name type="scientific">Levilactobacillus brevis (strain ATCC 367 / BCRC 12310 / CIP 105137 / JCM 1170 / LMG 11437 / NCIMB 947 / NCTC 947)</name>
    <name type="common">Lactobacillus brevis</name>
    <dbReference type="NCBI Taxonomy" id="387344"/>
    <lineage>
        <taxon>Bacteria</taxon>
        <taxon>Bacillati</taxon>
        <taxon>Bacillota</taxon>
        <taxon>Bacilli</taxon>
        <taxon>Lactobacillales</taxon>
        <taxon>Lactobacillaceae</taxon>
        <taxon>Levilactobacillus</taxon>
    </lineage>
</organism>
<proteinExistence type="inferred from homology"/>
<accession>Q03S97</accession>
<keyword id="KW-0067">ATP-binding</keyword>
<keyword id="KW-0460">Magnesium</keyword>
<keyword id="KW-0479">Metal-binding</keyword>
<keyword id="KW-0547">Nucleotide-binding</keyword>
<keyword id="KW-0548">Nucleotidyltransferase</keyword>
<keyword id="KW-1185">Reference proteome</keyword>
<keyword id="KW-0692">RNA repair</keyword>
<keyword id="KW-0694">RNA-binding</keyword>
<keyword id="KW-0808">Transferase</keyword>
<keyword id="KW-0819">tRNA processing</keyword>
<name>CCA_LEVBA</name>